<reference key="1">
    <citation type="journal article" date="2001" name="Lancet">
        <title>Whole genome sequencing of meticillin-resistant Staphylococcus aureus.</title>
        <authorList>
            <person name="Kuroda M."/>
            <person name="Ohta T."/>
            <person name="Uchiyama I."/>
            <person name="Baba T."/>
            <person name="Yuzawa H."/>
            <person name="Kobayashi I."/>
            <person name="Cui L."/>
            <person name="Oguchi A."/>
            <person name="Aoki K."/>
            <person name="Nagai Y."/>
            <person name="Lian J.-Q."/>
            <person name="Ito T."/>
            <person name="Kanamori M."/>
            <person name="Matsumaru H."/>
            <person name="Maruyama A."/>
            <person name="Murakami H."/>
            <person name="Hosoyama A."/>
            <person name="Mizutani-Ui Y."/>
            <person name="Takahashi N.K."/>
            <person name="Sawano T."/>
            <person name="Inoue R."/>
            <person name="Kaito C."/>
            <person name="Sekimizu K."/>
            <person name="Hirakawa H."/>
            <person name="Kuhara S."/>
            <person name="Goto S."/>
            <person name="Yabuzaki J."/>
            <person name="Kanehisa M."/>
            <person name="Yamashita A."/>
            <person name="Oshima K."/>
            <person name="Furuya K."/>
            <person name="Yoshino C."/>
            <person name="Shiba T."/>
            <person name="Hattori M."/>
            <person name="Ogasawara N."/>
            <person name="Hayashi H."/>
            <person name="Hiramatsu K."/>
        </authorList>
    </citation>
    <scope>NUCLEOTIDE SEQUENCE [LARGE SCALE GENOMIC DNA]</scope>
    <source>
        <strain>N315</strain>
    </source>
</reference>
<reference key="2">
    <citation type="journal article" date="2005" name="J. Microbiol. Methods">
        <title>Correlation of proteomic and transcriptomic profiles of Staphylococcus aureus during the post-exponential phase of growth.</title>
        <authorList>
            <person name="Scherl A."/>
            <person name="Francois P."/>
            <person name="Bento M."/>
            <person name="Deshusses J.M."/>
            <person name="Charbonnier Y."/>
            <person name="Converset V."/>
            <person name="Huyghe A."/>
            <person name="Walter N."/>
            <person name="Hoogland C."/>
            <person name="Appel R.D."/>
            <person name="Sanchez J.-C."/>
            <person name="Zimmermann-Ivol C.G."/>
            <person name="Corthals G.L."/>
            <person name="Hochstrasser D.F."/>
            <person name="Schrenzel J."/>
        </authorList>
    </citation>
    <scope>IDENTIFICATION BY MASS SPECTROMETRY</scope>
    <source>
        <strain>N315</strain>
    </source>
</reference>
<reference key="3">
    <citation type="submission" date="2007-10" db="UniProtKB">
        <title>Shotgun proteomic analysis of total and membrane protein extracts of S. aureus strain N315.</title>
        <authorList>
            <person name="Vaezzadeh A.R."/>
            <person name="Deshusses J."/>
            <person name="Lescuyer P."/>
            <person name="Hochstrasser D.F."/>
        </authorList>
    </citation>
    <scope>IDENTIFICATION BY MASS SPECTROMETRY [LARGE SCALE ANALYSIS]</scope>
    <source>
        <strain>N315</strain>
    </source>
</reference>
<dbReference type="EC" id="3.4.21.92" evidence="1"/>
<dbReference type="EMBL" id="BA000018">
    <property type="protein sequence ID" value="BAB41956.1"/>
    <property type="molecule type" value="Genomic_DNA"/>
</dbReference>
<dbReference type="PIR" id="A89850">
    <property type="entry name" value="A89850"/>
</dbReference>
<dbReference type="RefSeq" id="WP_001049165.1">
    <property type="nucleotide sequence ID" value="NC_002745.2"/>
</dbReference>
<dbReference type="SMR" id="P99089"/>
<dbReference type="MEROPS" id="S14.001"/>
<dbReference type="EnsemblBacteria" id="BAB41956">
    <property type="protein sequence ID" value="BAB41956"/>
    <property type="gene ID" value="BAB41956"/>
</dbReference>
<dbReference type="GeneID" id="98345115"/>
<dbReference type="KEGG" id="sau:SA0723"/>
<dbReference type="HOGENOM" id="CLU_058707_3_2_9"/>
<dbReference type="GO" id="GO:0005737">
    <property type="term" value="C:cytoplasm"/>
    <property type="evidence" value="ECO:0007669"/>
    <property type="project" value="UniProtKB-SubCell"/>
</dbReference>
<dbReference type="GO" id="GO:0009368">
    <property type="term" value="C:endopeptidase Clp complex"/>
    <property type="evidence" value="ECO:0007669"/>
    <property type="project" value="TreeGrafter"/>
</dbReference>
<dbReference type="GO" id="GO:0004176">
    <property type="term" value="F:ATP-dependent peptidase activity"/>
    <property type="evidence" value="ECO:0007669"/>
    <property type="project" value="InterPro"/>
</dbReference>
<dbReference type="GO" id="GO:0051117">
    <property type="term" value="F:ATPase binding"/>
    <property type="evidence" value="ECO:0007669"/>
    <property type="project" value="TreeGrafter"/>
</dbReference>
<dbReference type="GO" id="GO:0004252">
    <property type="term" value="F:serine-type endopeptidase activity"/>
    <property type="evidence" value="ECO:0007669"/>
    <property type="project" value="UniProtKB-UniRule"/>
</dbReference>
<dbReference type="GO" id="GO:0006515">
    <property type="term" value="P:protein quality control for misfolded or incompletely synthesized proteins"/>
    <property type="evidence" value="ECO:0007669"/>
    <property type="project" value="TreeGrafter"/>
</dbReference>
<dbReference type="CDD" id="cd07017">
    <property type="entry name" value="S14_ClpP_2"/>
    <property type="match status" value="1"/>
</dbReference>
<dbReference type="FunFam" id="3.90.226.10:FF:000001">
    <property type="entry name" value="ATP-dependent Clp protease proteolytic subunit"/>
    <property type="match status" value="1"/>
</dbReference>
<dbReference type="Gene3D" id="3.90.226.10">
    <property type="entry name" value="2-enoyl-CoA Hydratase, Chain A, domain 1"/>
    <property type="match status" value="1"/>
</dbReference>
<dbReference type="HAMAP" id="MF_00444">
    <property type="entry name" value="ClpP"/>
    <property type="match status" value="1"/>
</dbReference>
<dbReference type="InterPro" id="IPR001907">
    <property type="entry name" value="ClpP"/>
</dbReference>
<dbReference type="InterPro" id="IPR029045">
    <property type="entry name" value="ClpP/crotonase-like_dom_sf"/>
</dbReference>
<dbReference type="InterPro" id="IPR023562">
    <property type="entry name" value="ClpP/TepA"/>
</dbReference>
<dbReference type="InterPro" id="IPR033135">
    <property type="entry name" value="ClpP_His_AS"/>
</dbReference>
<dbReference type="InterPro" id="IPR018215">
    <property type="entry name" value="ClpP_Ser_AS"/>
</dbReference>
<dbReference type="NCBIfam" id="TIGR00493">
    <property type="entry name" value="clpP"/>
    <property type="match status" value="1"/>
</dbReference>
<dbReference type="NCBIfam" id="NF001368">
    <property type="entry name" value="PRK00277.1"/>
    <property type="match status" value="1"/>
</dbReference>
<dbReference type="NCBIfam" id="NF009205">
    <property type="entry name" value="PRK12553.1"/>
    <property type="match status" value="1"/>
</dbReference>
<dbReference type="PANTHER" id="PTHR10381">
    <property type="entry name" value="ATP-DEPENDENT CLP PROTEASE PROTEOLYTIC SUBUNIT"/>
    <property type="match status" value="1"/>
</dbReference>
<dbReference type="PANTHER" id="PTHR10381:SF70">
    <property type="entry name" value="ATP-DEPENDENT CLP PROTEASE PROTEOLYTIC SUBUNIT"/>
    <property type="match status" value="1"/>
</dbReference>
<dbReference type="Pfam" id="PF00574">
    <property type="entry name" value="CLP_protease"/>
    <property type="match status" value="1"/>
</dbReference>
<dbReference type="PRINTS" id="PR00127">
    <property type="entry name" value="CLPPROTEASEP"/>
</dbReference>
<dbReference type="SUPFAM" id="SSF52096">
    <property type="entry name" value="ClpP/crotonase"/>
    <property type="match status" value="1"/>
</dbReference>
<dbReference type="PROSITE" id="PS00382">
    <property type="entry name" value="CLP_PROTEASE_HIS"/>
    <property type="match status" value="1"/>
</dbReference>
<dbReference type="PROSITE" id="PS00381">
    <property type="entry name" value="CLP_PROTEASE_SER"/>
    <property type="match status" value="1"/>
</dbReference>
<sequence length="195" mass="21514">MNLIPTVIETTNRGERAYDIYSRLLKDRIIMLGSQIDDNVANSIVSQLLFLQAQDSEKDIYLYINSPGGSVTAGFAIYDTIQHIKPDVQTICIGMAASMGSFLLAAGAKGKRFALPNAEVMIHQPLGGAQGQATEIEIAANHILKTREKLNRILSERTGQSIEKIQKDTDRDNFLTAEEAKEYGLIDEVMVPETK</sequence>
<gene>
    <name evidence="1" type="primary">clpP</name>
    <name type="ordered locus">SA0723</name>
</gene>
<feature type="chain" id="PRO_0000179651" description="ATP-dependent Clp protease proteolytic subunit">
    <location>
        <begin position="1"/>
        <end position="195"/>
    </location>
</feature>
<feature type="active site" description="Nucleophile" evidence="1">
    <location>
        <position position="98"/>
    </location>
</feature>
<feature type="active site" evidence="1">
    <location>
        <position position="123"/>
    </location>
</feature>
<comment type="function">
    <text evidence="1">Cleaves peptides in various proteins in a process that requires ATP hydrolysis. Has a chymotrypsin-like activity. Plays a major role in the degradation of misfolded proteins.</text>
</comment>
<comment type="catalytic activity">
    <reaction evidence="1">
        <text>Hydrolysis of proteins to small peptides in the presence of ATP and magnesium. alpha-casein is the usual test substrate. In the absence of ATP, only oligopeptides shorter than five residues are hydrolyzed (such as succinyl-Leu-Tyr-|-NHMec, and Leu-Tyr-Leu-|-Tyr-Trp, in which cleavage of the -Tyr-|-Leu- and -Tyr-|-Trp bonds also occurs).</text>
        <dbReference type="EC" id="3.4.21.92"/>
    </reaction>
</comment>
<comment type="subunit">
    <text evidence="1">Fourteen ClpP subunits assemble into 2 heptameric rings which stack back to back to give a disk-like structure with a central cavity, resembling the structure of eukaryotic proteasomes.</text>
</comment>
<comment type="subcellular location">
    <subcellularLocation>
        <location evidence="1">Cytoplasm</location>
    </subcellularLocation>
</comment>
<comment type="similarity">
    <text evidence="1">Belongs to the peptidase S14 family.</text>
</comment>
<proteinExistence type="evidence at protein level"/>
<protein>
    <recommendedName>
        <fullName evidence="1">ATP-dependent Clp protease proteolytic subunit</fullName>
        <ecNumber evidence="1">3.4.21.92</ecNumber>
    </recommendedName>
    <alternativeName>
        <fullName evidence="1">Endopeptidase Clp</fullName>
    </alternativeName>
</protein>
<name>CLPP_STAAN</name>
<organism>
    <name type="scientific">Staphylococcus aureus (strain N315)</name>
    <dbReference type="NCBI Taxonomy" id="158879"/>
    <lineage>
        <taxon>Bacteria</taxon>
        <taxon>Bacillati</taxon>
        <taxon>Bacillota</taxon>
        <taxon>Bacilli</taxon>
        <taxon>Bacillales</taxon>
        <taxon>Staphylococcaceae</taxon>
        <taxon>Staphylococcus</taxon>
    </lineage>
</organism>
<accession>P99089</accession>
<accession>Q99VK9</accession>
<evidence type="ECO:0000255" key="1">
    <source>
        <dbReference type="HAMAP-Rule" id="MF_00444"/>
    </source>
</evidence>
<keyword id="KW-0963">Cytoplasm</keyword>
<keyword id="KW-0378">Hydrolase</keyword>
<keyword id="KW-0645">Protease</keyword>
<keyword id="KW-0720">Serine protease</keyword>